<feature type="chain" id="PRO_0000301717" description="Chromosome segregation in meiosis protein 3">
    <location>
        <begin position="1"/>
        <end position="337"/>
    </location>
</feature>
<feature type="region of interest" description="Disordered" evidence="2">
    <location>
        <begin position="21"/>
        <end position="46"/>
    </location>
</feature>
<feature type="region of interest" description="Disordered" evidence="2">
    <location>
        <begin position="155"/>
        <end position="177"/>
    </location>
</feature>
<feature type="region of interest" description="Disordered" evidence="2">
    <location>
        <begin position="191"/>
        <end position="230"/>
    </location>
</feature>
<feature type="compositionally biased region" description="Basic and acidic residues" evidence="2">
    <location>
        <begin position="21"/>
        <end position="33"/>
    </location>
</feature>
<feature type="compositionally biased region" description="Polar residues" evidence="2">
    <location>
        <begin position="155"/>
        <end position="164"/>
    </location>
</feature>
<feature type="compositionally biased region" description="Basic and acidic residues" evidence="2">
    <location>
        <begin position="165"/>
        <end position="174"/>
    </location>
</feature>
<protein>
    <recommendedName>
        <fullName>Chromosome segregation in meiosis protein 3</fullName>
    </recommendedName>
</protein>
<proteinExistence type="inferred from homology"/>
<dbReference type="EMBL" id="GG704913">
    <property type="protein sequence ID" value="EAS29769.3"/>
    <property type="molecule type" value="Genomic_DNA"/>
</dbReference>
<dbReference type="RefSeq" id="XP_001241352.2">
    <property type="nucleotide sequence ID" value="XM_001241351.2"/>
</dbReference>
<dbReference type="SMR" id="Q1DME8"/>
<dbReference type="FunCoup" id="Q1DME8">
    <property type="interactions" value="204"/>
</dbReference>
<dbReference type="STRING" id="246410.Q1DME8"/>
<dbReference type="GeneID" id="4560346"/>
<dbReference type="KEGG" id="cim:CIMG_08515"/>
<dbReference type="VEuPathDB" id="FungiDB:CIMG_08515"/>
<dbReference type="InParanoid" id="Q1DME8"/>
<dbReference type="OMA" id="MRKEWIN"/>
<dbReference type="OrthoDB" id="437078at2759"/>
<dbReference type="Proteomes" id="UP000001261">
    <property type="component" value="Unassembled WGS sequence"/>
</dbReference>
<dbReference type="GO" id="GO:0031298">
    <property type="term" value="C:replication fork protection complex"/>
    <property type="evidence" value="ECO:0007669"/>
    <property type="project" value="TreeGrafter"/>
</dbReference>
<dbReference type="GO" id="GO:0003677">
    <property type="term" value="F:DNA binding"/>
    <property type="evidence" value="ECO:0007669"/>
    <property type="project" value="TreeGrafter"/>
</dbReference>
<dbReference type="GO" id="GO:0006281">
    <property type="term" value="P:DNA repair"/>
    <property type="evidence" value="ECO:0007669"/>
    <property type="project" value="UniProtKB-KW"/>
</dbReference>
<dbReference type="GO" id="GO:0000076">
    <property type="term" value="P:DNA replication checkpoint signaling"/>
    <property type="evidence" value="ECO:0007669"/>
    <property type="project" value="InterPro"/>
</dbReference>
<dbReference type="GO" id="GO:0051321">
    <property type="term" value="P:meiotic cell cycle"/>
    <property type="evidence" value="ECO:0007669"/>
    <property type="project" value="UniProtKB-KW"/>
</dbReference>
<dbReference type="GO" id="GO:0043111">
    <property type="term" value="P:replication fork arrest"/>
    <property type="evidence" value="ECO:0007669"/>
    <property type="project" value="TreeGrafter"/>
</dbReference>
<dbReference type="GO" id="GO:0031297">
    <property type="term" value="P:replication fork processing"/>
    <property type="evidence" value="ECO:0007669"/>
    <property type="project" value="InterPro"/>
</dbReference>
<dbReference type="InterPro" id="IPR012923">
    <property type="entry name" value="Csm3"/>
</dbReference>
<dbReference type="InterPro" id="IPR040038">
    <property type="entry name" value="TIPIN/Csm3/Swi3"/>
</dbReference>
<dbReference type="PANTHER" id="PTHR13220">
    <property type="entry name" value="TIMELESS INTERACTING-RELATED"/>
    <property type="match status" value="1"/>
</dbReference>
<dbReference type="PANTHER" id="PTHR13220:SF11">
    <property type="entry name" value="TIMELESS-INTERACTING PROTEIN"/>
    <property type="match status" value="1"/>
</dbReference>
<dbReference type="Pfam" id="PF07962">
    <property type="entry name" value="Swi3"/>
    <property type="match status" value="1"/>
</dbReference>
<comment type="function">
    <text evidence="1">Forms a fork protection complex (FPC) with TOF1 and which is required for chromosome segregation during meiosis and DNA damage repair. FPC coordinates leading and lagging strand synthesis and moves with the replication fork. FPC stabilizes replication forks in a configuration that is recognized by replication checkpoint sensors (By similarity).</text>
</comment>
<comment type="subunit">
    <text evidence="1">Component of the fork protection complex (FPC) consisting of TOF1 and CSM3.</text>
</comment>
<comment type="subcellular location">
    <subcellularLocation>
        <location evidence="1">Nucleus</location>
    </subcellularLocation>
</comment>
<comment type="similarity">
    <text evidence="3">Belongs to the CSM3 family.</text>
</comment>
<gene>
    <name type="primary">CSM3</name>
    <name type="ORF">CIMG_08515</name>
</gene>
<sequence length="337" mass="37636">MAEDTAFDDLFNYDAGIEELLRDPEEEKNDRRASGTGTGSTENKNDDLIGLEEIKITRKRAPPVKLDENRLLSQAGIPKLRRSAKTKLKFKGKRHEFSDVARLLNFYQLWLDDLYPRAKFADGLSIIEKLGHTKRMQVMRKEWIDEGKPGRNLYDSNVTYLDPNSDNRGDKDTADPTIPSIFQRTLEQSAPAMEAHRNDQAESTHSPKRLSDSEIPIFGGGKAISLRNNADDDDDLFVPGNEGMDIDPPVQASQVPEEDDLDTFLAEQESTMQNTAHGLGILKPNAPPADEEDDLDALLAEAENTPARAPKTGHLEANRPAADDFDDELHILNEFGL</sequence>
<keyword id="KW-0131">Cell cycle</keyword>
<keyword id="KW-0227">DNA damage</keyword>
<keyword id="KW-0234">DNA repair</keyword>
<keyword id="KW-0236">DNA replication inhibitor</keyword>
<keyword id="KW-0469">Meiosis</keyword>
<keyword id="KW-0539">Nucleus</keyword>
<keyword id="KW-1185">Reference proteome</keyword>
<reference key="1">
    <citation type="journal article" date="2009" name="Genome Res.">
        <title>Comparative genomic analyses of the human fungal pathogens Coccidioides and their relatives.</title>
        <authorList>
            <person name="Sharpton T.J."/>
            <person name="Stajich J.E."/>
            <person name="Rounsley S.D."/>
            <person name="Gardner M.J."/>
            <person name="Wortman J.R."/>
            <person name="Jordar V.S."/>
            <person name="Maiti R."/>
            <person name="Kodira C.D."/>
            <person name="Neafsey D.E."/>
            <person name="Zeng Q."/>
            <person name="Hung C.-Y."/>
            <person name="McMahan C."/>
            <person name="Muszewska A."/>
            <person name="Grynberg M."/>
            <person name="Mandel M.A."/>
            <person name="Kellner E.M."/>
            <person name="Barker B.M."/>
            <person name="Galgiani J.N."/>
            <person name="Orbach M.J."/>
            <person name="Kirkland T.N."/>
            <person name="Cole G.T."/>
            <person name="Henn M.R."/>
            <person name="Birren B.W."/>
            <person name="Taylor J.W."/>
        </authorList>
    </citation>
    <scope>NUCLEOTIDE SEQUENCE [LARGE SCALE GENOMIC DNA]</scope>
    <source>
        <strain>RS</strain>
    </source>
</reference>
<reference key="2">
    <citation type="journal article" date="2010" name="Genome Res.">
        <title>Population genomic sequencing of Coccidioides fungi reveals recent hybridization and transposon control.</title>
        <authorList>
            <person name="Neafsey D.E."/>
            <person name="Barker B.M."/>
            <person name="Sharpton T.J."/>
            <person name="Stajich J.E."/>
            <person name="Park D.J."/>
            <person name="Whiston E."/>
            <person name="Hung C.-Y."/>
            <person name="McMahan C."/>
            <person name="White J."/>
            <person name="Sykes S."/>
            <person name="Heiman D."/>
            <person name="Young S."/>
            <person name="Zeng Q."/>
            <person name="Abouelleil A."/>
            <person name="Aftuck L."/>
            <person name="Bessette D."/>
            <person name="Brown A."/>
            <person name="FitzGerald M."/>
            <person name="Lui A."/>
            <person name="Macdonald J.P."/>
            <person name="Priest M."/>
            <person name="Orbach M.J."/>
            <person name="Galgiani J.N."/>
            <person name="Kirkland T.N."/>
            <person name="Cole G.T."/>
            <person name="Birren B.W."/>
            <person name="Henn M.R."/>
            <person name="Taylor J.W."/>
            <person name="Rounsley S.D."/>
        </authorList>
    </citation>
    <scope>GENOME REANNOTATION</scope>
    <source>
        <strain>RS</strain>
    </source>
</reference>
<organism>
    <name type="scientific">Coccidioides immitis (strain RS)</name>
    <name type="common">Valley fever fungus</name>
    <dbReference type="NCBI Taxonomy" id="246410"/>
    <lineage>
        <taxon>Eukaryota</taxon>
        <taxon>Fungi</taxon>
        <taxon>Dikarya</taxon>
        <taxon>Ascomycota</taxon>
        <taxon>Pezizomycotina</taxon>
        <taxon>Eurotiomycetes</taxon>
        <taxon>Eurotiomycetidae</taxon>
        <taxon>Onygenales</taxon>
        <taxon>Onygenaceae</taxon>
        <taxon>Coccidioides</taxon>
    </lineage>
</organism>
<evidence type="ECO:0000250" key="1"/>
<evidence type="ECO:0000256" key="2">
    <source>
        <dbReference type="SAM" id="MobiDB-lite"/>
    </source>
</evidence>
<evidence type="ECO:0000305" key="3"/>
<name>CSM3_COCIM</name>
<accession>Q1DME8</accession>
<accession>J3K6B5</accession>